<evidence type="ECO:0000250" key="1">
    <source>
        <dbReference type="UniProtKB" id="Q9JMC8"/>
    </source>
</evidence>
<evidence type="ECO:0000255" key="2">
    <source>
        <dbReference type="PROSITE-ProRule" id="PRU00084"/>
    </source>
</evidence>
<evidence type="ECO:0000256" key="3">
    <source>
        <dbReference type="SAM" id="MobiDB-lite"/>
    </source>
</evidence>
<evidence type="ECO:0000269" key="4">
    <source>
    </source>
</evidence>
<evidence type="ECO:0000269" key="5">
    <source>
    </source>
</evidence>
<evidence type="ECO:0000269" key="6">
    <source>
    </source>
</evidence>
<evidence type="ECO:0000269" key="7">
    <source>
    </source>
</evidence>
<evidence type="ECO:0000303" key="8">
    <source>
    </source>
</evidence>
<evidence type="ECO:0000303" key="9">
    <source>
    </source>
</evidence>
<evidence type="ECO:0000303" key="10">
    <source>
    </source>
</evidence>
<evidence type="ECO:0000305" key="11"/>
<evidence type="ECO:0000312" key="12">
    <source>
        <dbReference type="HGNC" id="HGNC:19818"/>
    </source>
</evidence>
<feature type="chain" id="PRO_0000219404" description="Band 4.1-like protein 4B">
    <location>
        <begin position="1"/>
        <end position="900"/>
    </location>
</feature>
<feature type="domain" description="FERM" evidence="2">
    <location>
        <begin position="85"/>
        <end position="369"/>
    </location>
</feature>
<feature type="region of interest" description="Disordered" evidence="3">
    <location>
        <begin position="23"/>
        <end position="48"/>
    </location>
</feature>
<feature type="region of interest" description="Disordered" evidence="3">
    <location>
        <begin position="400"/>
        <end position="425"/>
    </location>
</feature>
<feature type="region of interest" description="Disordered" evidence="3">
    <location>
        <begin position="492"/>
        <end position="519"/>
    </location>
</feature>
<feature type="region of interest" description="Disordered" evidence="3">
    <location>
        <begin position="528"/>
        <end position="547"/>
    </location>
</feature>
<feature type="region of interest" description="Disordered" evidence="3">
    <location>
        <begin position="706"/>
        <end position="750"/>
    </location>
</feature>
<feature type="compositionally biased region" description="Basic residues" evidence="3">
    <location>
        <begin position="413"/>
        <end position="424"/>
    </location>
</feature>
<feature type="compositionally biased region" description="Basic residues" evidence="3">
    <location>
        <begin position="502"/>
        <end position="517"/>
    </location>
</feature>
<feature type="compositionally biased region" description="Polar residues" evidence="3">
    <location>
        <begin position="535"/>
        <end position="547"/>
    </location>
</feature>
<feature type="splice variant" id="VSP_007202" description="In isoform 2." evidence="8 9">
    <original>SYPLPSPVLSSSDRLPFGIEENGGTPFLTAASGRHHHQHQHQHQHQHHS</original>
    <variation>RPSFQDDRSHWKASASGDDSHFDYVHDQNQKNLGGMQSMMYRDKLMTAL</variation>
    <location>
        <begin position="470"/>
        <end position="518"/>
    </location>
</feature>
<feature type="splice variant" id="VSP_007203" description="In isoform 2." evidence="8 9">
    <location>
        <begin position="519"/>
        <end position="900"/>
    </location>
</feature>
<feature type="sequence variant" id="VAR_048356" description="In dbSNP:rs3750450." evidence="4">
    <original>N</original>
    <variation>T</variation>
    <location>
        <position position="816"/>
    </location>
</feature>
<feature type="sequence conflict" description="In Ref. 2; BAA96079." evidence="11" ref="2">
    <original>V</original>
    <variation>M</variation>
    <location>
        <position position="73"/>
    </location>
</feature>
<feature type="sequence conflict" description="In Ref. 1; AAG43366." evidence="11" ref="1">
    <original>E</original>
    <variation>R</variation>
    <location>
        <position position="899"/>
    </location>
</feature>
<protein>
    <recommendedName>
        <fullName>Band 4.1-like protein 4B</fullName>
    </recommendedName>
    <alternativeName>
        <fullName evidence="12">Erythrocyte membrane protein band 4.1-like 4B</fullName>
    </alternativeName>
    <alternativeName>
        <fullName>FERM-containing protein CG1</fullName>
    </alternativeName>
    <alternativeName>
        <fullName>Protein EHM2</fullName>
    </alternativeName>
</protein>
<gene>
    <name evidence="12" type="primary">EPB41L4B</name>
    <name evidence="12" type="synonym">EHM2</name>
    <name evidence="10" type="synonym">LULU2</name>
</gene>
<proteinExistence type="evidence at protein level"/>
<reference key="1">
    <citation type="journal article" date="2000" name="Mamm. Genome">
        <title>Cloning, mapping, and expression of a novel brain-specific transcript in the familial dysautonomia candidate region on chromosome 9q31.</title>
        <authorList>
            <person name="Chadwick B.P."/>
            <person name="Leyne M."/>
            <person name="Gill S."/>
            <person name="Liebert C.B."/>
            <person name="Mull J."/>
            <person name="Mezey E."/>
            <person name="Robbins C.M."/>
            <person name="Pinkett H.W."/>
            <person name="Makalowska I."/>
            <person name="Maayan C."/>
            <person name="Blumenfeld A."/>
            <person name="Axelrod F.B."/>
            <person name="Brownstein M."/>
            <person name="Gusella J.F."/>
            <person name="Slaugenhaupt S.A."/>
        </authorList>
    </citation>
    <scope>NUCLEOTIDE SEQUENCE [MRNA] (ISOFORMS 1 AND 2)</scope>
    <scope>VARIANT THR-816</scope>
</reference>
<reference key="2">
    <citation type="journal article" date="2000" name="Genomics">
        <title>Molecular cloning of a novel NF2/ERM/4.1 superfamily gene, Ehm2, that is expressed in high-metastatic K1735 murine melanoma cells.</title>
        <authorList>
            <person name="Shimizu K."/>
            <person name="Nagamachi Y."/>
            <person name="Tani M."/>
            <person name="Kimura K."/>
            <person name="Shiroishi T."/>
            <person name="Wakana S."/>
            <person name="Yokota J."/>
        </authorList>
    </citation>
    <scope>NUCLEOTIDE SEQUENCE [MRNA] (ISOFORM 2)</scope>
</reference>
<reference key="3">
    <citation type="journal article" date="2004" name="Nature">
        <title>DNA sequence and analysis of human chromosome 9.</title>
        <authorList>
            <person name="Humphray S.J."/>
            <person name="Oliver K."/>
            <person name="Hunt A.R."/>
            <person name="Plumb R.W."/>
            <person name="Loveland J.E."/>
            <person name="Howe K.L."/>
            <person name="Andrews T.D."/>
            <person name="Searle S."/>
            <person name="Hunt S.E."/>
            <person name="Scott C.E."/>
            <person name="Jones M.C."/>
            <person name="Ainscough R."/>
            <person name="Almeida J.P."/>
            <person name="Ambrose K.D."/>
            <person name="Ashwell R.I.S."/>
            <person name="Babbage A.K."/>
            <person name="Babbage S."/>
            <person name="Bagguley C.L."/>
            <person name="Bailey J."/>
            <person name="Banerjee R."/>
            <person name="Barker D.J."/>
            <person name="Barlow K.F."/>
            <person name="Bates K."/>
            <person name="Beasley H."/>
            <person name="Beasley O."/>
            <person name="Bird C.P."/>
            <person name="Bray-Allen S."/>
            <person name="Brown A.J."/>
            <person name="Brown J.Y."/>
            <person name="Burford D."/>
            <person name="Burrill W."/>
            <person name="Burton J."/>
            <person name="Carder C."/>
            <person name="Carter N.P."/>
            <person name="Chapman J.C."/>
            <person name="Chen Y."/>
            <person name="Clarke G."/>
            <person name="Clark S.Y."/>
            <person name="Clee C.M."/>
            <person name="Clegg S."/>
            <person name="Collier R.E."/>
            <person name="Corby N."/>
            <person name="Crosier M."/>
            <person name="Cummings A.T."/>
            <person name="Davies J."/>
            <person name="Dhami P."/>
            <person name="Dunn M."/>
            <person name="Dutta I."/>
            <person name="Dyer L.W."/>
            <person name="Earthrowl M.E."/>
            <person name="Faulkner L."/>
            <person name="Fleming C.J."/>
            <person name="Frankish A."/>
            <person name="Frankland J.A."/>
            <person name="French L."/>
            <person name="Fricker D.G."/>
            <person name="Garner P."/>
            <person name="Garnett J."/>
            <person name="Ghori J."/>
            <person name="Gilbert J.G.R."/>
            <person name="Glison C."/>
            <person name="Grafham D.V."/>
            <person name="Gribble S."/>
            <person name="Griffiths C."/>
            <person name="Griffiths-Jones S."/>
            <person name="Grocock R."/>
            <person name="Guy J."/>
            <person name="Hall R.E."/>
            <person name="Hammond S."/>
            <person name="Harley J.L."/>
            <person name="Harrison E.S.I."/>
            <person name="Hart E.A."/>
            <person name="Heath P.D."/>
            <person name="Henderson C.D."/>
            <person name="Hopkins B.L."/>
            <person name="Howard P.J."/>
            <person name="Howden P.J."/>
            <person name="Huckle E."/>
            <person name="Johnson C."/>
            <person name="Johnson D."/>
            <person name="Joy A.A."/>
            <person name="Kay M."/>
            <person name="Keenan S."/>
            <person name="Kershaw J.K."/>
            <person name="Kimberley A.M."/>
            <person name="King A."/>
            <person name="Knights A."/>
            <person name="Laird G.K."/>
            <person name="Langford C."/>
            <person name="Lawlor S."/>
            <person name="Leongamornlert D.A."/>
            <person name="Leversha M."/>
            <person name="Lloyd C."/>
            <person name="Lloyd D.M."/>
            <person name="Lovell J."/>
            <person name="Martin S."/>
            <person name="Mashreghi-Mohammadi M."/>
            <person name="Matthews L."/>
            <person name="McLaren S."/>
            <person name="McLay K.E."/>
            <person name="McMurray A."/>
            <person name="Milne S."/>
            <person name="Nickerson T."/>
            <person name="Nisbett J."/>
            <person name="Nordsiek G."/>
            <person name="Pearce A.V."/>
            <person name="Peck A.I."/>
            <person name="Porter K.M."/>
            <person name="Pandian R."/>
            <person name="Pelan S."/>
            <person name="Phillimore B."/>
            <person name="Povey S."/>
            <person name="Ramsey Y."/>
            <person name="Rand V."/>
            <person name="Scharfe M."/>
            <person name="Sehra H.K."/>
            <person name="Shownkeen R."/>
            <person name="Sims S.K."/>
            <person name="Skuce C.D."/>
            <person name="Smith M."/>
            <person name="Steward C.A."/>
            <person name="Swarbreck D."/>
            <person name="Sycamore N."/>
            <person name="Tester J."/>
            <person name="Thorpe A."/>
            <person name="Tracey A."/>
            <person name="Tromans A."/>
            <person name="Thomas D.W."/>
            <person name="Wall M."/>
            <person name="Wallis J.M."/>
            <person name="West A.P."/>
            <person name="Whitehead S.L."/>
            <person name="Willey D.L."/>
            <person name="Williams S.A."/>
            <person name="Wilming L."/>
            <person name="Wray P.W."/>
            <person name="Young L."/>
            <person name="Ashurst J.L."/>
            <person name="Coulson A."/>
            <person name="Blocker H."/>
            <person name="Durbin R.M."/>
            <person name="Sulston J.E."/>
            <person name="Hubbard T."/>
            <person name="Jackson M.J."/>
            <person name="Bentley D.R."/>
            <person name="Beck S."/>
            <person name="Rogers J."/>
            <person name="Dunham I."/>
        </authorList>
    </citation>
    <scope>NUCLEOTIDE SEQUENCE [LARGE SCALE GENOMIC DNA]</scope>
</reference>
<reference key="4">
    <citation type="journal article" date="2003" name="Biochem. Biophys. Res. Commun.">
        <title>Androgen regulation of the human FERM domain encoding gene EHM2 in a cell model of steroid-induced differentiation.</title>
        <authorList>
            <person name="Chauhan S."/>
            <person name="Pandey R."/>
            <person name="Way J.F."/>
            <person name="Sroka T.C."/>
            <person name="Demetriou M.C."/>
            <person name="Kunz S."/>
            <person name="Cress A.E."/>
            <person name="Mount D.W."/>
            <person name="Miesfeld R.L."/>
        </authorList>
    </citation>
    <scope>FUNCTION</scope>
    <scope>TISSUE SPECIFICITY</scope>
    <scope>INDUCTION</scope>
</reference>
<reference key="5">
    <citation type="journal article" date="2011" name="J. Cell Biol.">
        <title>Lulu2 regulates the circumferential actomyosin tensile system in epithelial cells through p114RhoGEF.</title>
        <authorList>
            <person name="Nakajima H."/>
            <person name="Tanoue T."/>
        </authorList>
    </citation>
    <scope>FUNCTION</scope>
    <scope>SUBCELLULAR LOCATION</scope>
</reference>
<reference key="6">
    <citation type="journal article" date="2013" name="J. Dermatol. Sci.">
        <title>Expressed in high metastatic cells (Ehm2) is a positive regulator of keratinocyte adhesion and motility: The implication for wound healing.</title>
        <authorList>
            <person name="Bosanquet D.C."/>
            <person name="Ye L."/>
            <person name="Harding K.G."/>
            <person name="Jiang W.G."/>
        </authorList>
    </citation>
    <scope>FUNCTION</scope>
    <scope>TISSUE SPECIFICITY</scope>
</reference>
<accession>Q9H329</accession>
<accession>Q5T4G5</accession>
<accession>Q5T4G6</accession>
<accession>Q9H328</accession>
<accession>Q9P2V3</accession>
<dbReference type="EMBL" id="AF153416">
    <property type="protein sequence ID" value="AAG43366.1"/>
    <property type="status" value="ALT_FRAME"/>
    <property type="molecule type" value="mRNA"/>
</dbReference>
<dbReference type="EMBL" id="AF153418">
    <property type="protein sequence ID" value="AAG43368.1"/>
    <property type="status" value="ALT_FRAME"/>
    <property type="molecule type" value="mRNA"/>
</dbReference>
<dbReference type="EMBL" id="AB032179">
    <property type="protein sequence ID" value="BAA96079.2"/>
    <property type="molecule type" value="mRNA"/>
</dbReference>
<dbReference type="EMBL" id="AL359963">
    <property type="status" value="NOT_ANNOTATED_CDS"/>
    <property type="molecule type" value="Genomic_DNA"/>
</dbReference>
<dbReference type="EMBL" id="AL358815">
    <property type="status" value="NOT_ANNOTATED_CDS"/>
    <property type="molecule type" value="Genomic_DNA"/>
</dbReference>
<dbReference type="CCDS" id="CCDS43859.1">
    <molecule id="Q9H329-1"/>
</dbReference>
<dbReference type="CCDS" id="CCDS43860.1">
    <molecule id="Q9H329-2"/>
</dbReference>
<dbReference type="RefSeq" id="NP_060894.2">
    <molecule id="Q9H329-2"/>
    <property type="nucleotide sequence ID" value="NM_018424.3"/>
</dbReference>
<dbReference type="RefSeq" id="NP_061987.3">
    <molecule id="Q9H329-1"/>
    <property type="nucleotide sequence ID" value="NM_019114.4"/>
</dbReference>
<dbReference type="SMR" id="Q9H329"/>
<dbReference type="BioGRID" id="120044">
    <property type="interactions" value="109"/>
</dbReference>
<dbReference type="FunCoup" id="Q9H329">
    <property type="interactions" value="1012"/>
</dbReference>
<dbReference type="IntAct" id="Q9H329">
    <property type="interactions" value="59"/>
</dbReference>
<dbReference type="MINT" id="Q9H329"/>
<dbReference type="STRING" id="9606.ENSP00000363694"/>
<dbReference type="GlyGen" id="Q9H329">
    <property type="glycosylation" value="4 sites, 1 O-linked glycan (3 sites)"/>
</dbReference>
<dbReference type="iPTMnet" id="Q9H329"/>
<dbReference type="PhosphoSitePlus" id="Q9H329"/>
<dbReference type="SwissPalm" id="Q9H329"/>
<dbReference type="BioMuta" id="EPB41L4B"/>
<dbReference type="DMDM" id="209572611"/>
<dbReference type="jPOST" id="Q9H329"/>
<dbReference type="MassIVE" id="Q9H329"/>
<dbReference type="PaxDb" id="9606-ENSP00000363694"/>
<dbReference type="PeptideAtlas" id="Q9H329"/>
<dbReference type="ProteomicsDB" id="80657">
    <molecule id="Q9H329-1"/>
</dbReference>
<dbReference type="ProteomicsDB" id="80658">
    <molecule id="Q9H329-2"/>
</dbReference>
<dbReference type="Pumba" id="Q9H329"/>
<dbReference type="Antibodypedia" id="29426">
    <property type="antibodies" value="78 antibodies from 22 providers"/>
</dbReference>
<dbReference type="DNASU" id="54566"/>
<dbReference type="Ensembl" id="ENST00000374557.4">
    <molecule id="Q9H329-2"/>
    <property type="protein sequence ID" value="ENSP00000363685.3"/>
    <property type="gene ID" value="ENSG00000095203.15"/>
</dbReference>
<dbReference type="Ensembl" id="ENST00000374566.8">
    <molecule id="Q9H329-1"/>
    <property type="protein sequence ID" value="ENSP00000363694.3"/>
    <property type="gene ID" value="ENSG00000095203.15"/>
</dbReference>
<dbReference type="GeneID" id="54566"/>
<dbReference type="KEGG" id="hsa:54566"/>
<dbReference type="MANE-Select" id="ENST00000374566.8">
    <property type="protein sequence ID" value="ENSP00000363694.3"/>
    <property type="RefSeq nucleotide sequence ID" value="NM_019114.5"/>
    <property type="RefSeq protein sequence ID" value="NP_061987.3"/>
</dbReference>
<dbReference type="UCSC" id="uc004bdz.3">
    <molecule id="Q9H329-1"/>
    <property type="organism name" value="human"/>
</dbReference>
<dbReference type="AGR" id="HGNC:19818"/>
<dbReference type="CTD" id="54566"/>
<dbReference type="DisGeNET" id="54566"/>
<dbReference type="GeneCards" id="EPB41L4B"/>
<dbReference type="HGNC" id="HGNC:19818">
    <property type="gene designation" value="EPB41L4B"/>
</dbReference>
<dbReference type="HPA" id="ENSG00000095203">
    <property type="expression patterns" value="Tissue enhanced (liver, pancreas)"/>
</dbReference>
<dbReference type="MIM" id="610340">
    <property type="type" value="gene"/>
</dbReference>
<dbReference type="neXtProt" id="NX_Q9H329"/>
<dbReference type="OpenTargets" id="ENSG00000095203"/>
<dbReference type="PharmGKB" id="PA134986250"/>
<dbReference type="VEuPathDB" id="HostDB:ENSG00000095203"/>
<dbReference type="eggNOG" id="KOG3530">
    <property type="taxonomic scope" value="Eukaryota"/>
</dbReference>
<dbReference type="GeneTree" id="ENSGT00940000158331"/>
<dbReference type="HOGENOM" id="CLU_003623_5_0_1"/>
<dbReference type="InParanoid" id="Q9H329"/>
<dbReference type="OMA" id="EKNEACM"/>
<dbReference type="OrthoDB" id="6235974at2759"/>
<dbReference type="PAN-GO" id="Q9H329">
    <property type="GO annotations" value="2 GO annotations based on evolutionary models"/>
</dbReference>
<dbReference type="PhylomeDB" id="Q9H329"/>
<dbReference type="TreeFam" id="TF319780"/>
<dbReference type="PathwayCommons" id="Q9H329"/>
<dbReference type="SignaLink" id="Q9H329"/>
<dbReference type="SIGNOR" id="Q9H329"/>
<dbReference type="BioGRID-ORCS" id="54566">
    <property type="hits" value="6 hits in 1147 CRISPR screens"/>
</dbReference>
<dbReference type="ChiTaRS" id="EPB41L4B">
    <property type="organism name" value="human"/>
</dbReference>
<dbReference type="GenomeRNAi" id="54566"/>
<dbReference type="Pharos" id="Q9H329">
    <property type="development level" value="Tbio"/>
</dbReference>
<dbReference type="PRO" id="PR:Q9H329"/>
<dbReference type="Proteomes" id="UP000005640">
    <property type="component" value="Chromosome 9"/>
</dbReference>
<dbReference type="RNAct" id="Q9H329">
    <property type="molecule type" value="protein"/>
</dbReference>
<dbReference type="Bgee" id="ENSG00000095203">
    <property type="expression patterns" value="Expressed in secondary oocyte and 168 other cell types or tissues"/>
</dbReference>
<dbReference type="GO" id="GO:0045177">
    <property type="term" value="C:apical part of cell"/>
    <property type="evidence" value="ECO:0000314"/>
    <property type="project" value="MGI"/>
</dbReference>
<dbReference type="GO" id="GO:0005923">
    <property type="term" value="C:bicellular tight junction"/>
    <property type="evidence" value="ECO:0007669"/>
    <property type="project" value="UniProtKB-SubCell"/>
</dbReference>
<dbReference type="GO" id="GO:0005737">
    <property type="term" value="C:cytoplasm"/>
    <property type="evidence" value="ECO:0000314"/>
    <property type="project" value="UniProtKB"/>
</dbReference>
<dbReference type="GO" id="GO:0005856">
    <property type="term" value="C:cytoskeleton"/>
    <property type="evidence" value="ECO:0000318"/>
    <property type="project" value="GO_Central"/>
</dbReference>
<dbReference type="GO" id="GO:0005829">
    <property type="term" value="C:cytosol"/>
    <property type="evidence" value="ECO:0000314"/>
    <property type="project" value="HPA"/>
</dbReference>
<dbReference type="GO" id="GO:0005886">
    <property type="term" value="C:plasma membrane"/>
    <property type="evidence" value="ECO:0000314"/>
    <property type="project" value="HPA"/>
</dbReference>
<dbReference type="GO" id="GO:0008092">
    <property type="term" value="F:cytoskeletal protein binding"/>
    <property type="evidence" value="ECO:0007669"/>
    <property type="project" value="InterPro"/>
</dbReference>
<dbReference type="GO" id="GO:0005200">
    <property type="term" value="F:structural constituent of cytoskeleton"/>
    <property type="evidence" value="ECO:0000304"/>
    <property type="project" value="ProtInc"/>
</dbReference>
<dbReference type="GO" id="GO:0031032">
    <property type="term" value="P:actomyosin structure organization"/>
    <property type="evidence" value="ECO:0000314"/>
    <property type="project" value="MGI"/>
</dbReference>
<dbReference type="GO" id="GO:0045785">
    <property type="term" value="P:positive regulation of cell adhesion"/>
    <property type="evidence" value="ECO:0000315"/>
    <property type="project" value="UniProtKB"/>
</dbReference>
<dbReference type="GO" id="GO:0010628">
    <property type="term" value="P:positive regulation of gene expression"/>
    <property type="evidence" value="ECO:0000315"/>
    <property type="project" value="UniProtKB"/>
</dbReference>
<dbReference type="GO" id="GO:0051549">
    <property type="term" value="P:positive regulation of keratinocyte migration"/>
    <property type="evidence" value="ECO:0000315"/>
    <property type="project" value="UniProtKB"/>
</dbReference>
<dbReference type="GO" id="GO:0042060">
    <property type="term" value="P:wound healing"/>
    <property type="evidence" value="ECO:0000314"/>
    <property type="project" value="UniProtKB"/>
</dbReference>
<dbReference type="CDD" id="cd14473">
    <property type="entry name" value="FERM_B-lobe"/>
    <property type="match status" value="1"/>
</dbReference>
<dbReference type="CDD" id="cd13186">
    <property type="entry name" value="FERM_C_NBL4_NBL5"/>
    <property type="match status" value="1"/>
</dbReference>
<dbReference type="CDD" id="cd17204">
    <property type="entry name" value="FERM_F1_EPB41L4B"/>
    <property type="match status" value="1"/>
</dbReference>
<dbReference type="FunFam" id="2.30.29.30:FF:000002">
    <property type="entry name" value="Band 4.1-like protein 5 isoform 1"/>
    <property type="match status" value="1"/>
</dbReference>
<dbReference type="FunFam" id="3.10.20.90:FF:000024">
    <property type="entry name" value="Erythrocyte membrane protein band 4.1-like 5"/>
    <property type="match status" value="1"/>
</dbReference>
<dbReference type="FunFam" id="1.20.80.10:FF:000003">
    <property type="entry name" value="Tyrosine-protein phosphatase non-receptor type 4"/>
    <property type="match status" value="1"/>
</dbReference>
<dbReference type="Gene3D" id="1.20.80.10">
    <property type="match status" value="1"/>
</dbReference>
<dbReference type="Gene3D" id="3.10.20.90">
    <property type="entry name" value="Phosphatidylinositol 3-kinase Catalytic Subunit, Chain A, domain 1"/>
    <property type="match status" value="1"/>
</dbReference>
<dbReference type="Gene3D" id="2.30.29.30">
    <property type="entry name" value="Pleckstrin-homology domain (PH domain)/Phosphotyrosine-binding domain (PTB)"/>
    <property type="match status" value="1"/>
</dbReference>
<dbReference type="InterPro" id="IPR019749">
    <property type="entry name" value="Band_41_domain"/>
</dbReference>
<dbReference type="InterPro" id="IPR030698">
    <property type="entry name" value="EHM2_FERM_F1"/>
</dbReference>
<dbReference type="InterPro" id="IPR000798">
    <property type="entry name" value="Ez/rad/moesin-like"/>
</dbReference>
<dbReference type="InterPro" id="IPR014847">
    <property type="entry name" value="FA"/>
</dbReference>
<dbReference type="InterPro" id="IPR014352">
    <property type="entry name" value="FERM/acyl-CoA-bd_prot_sf"/>
</dbReference>
<dbReference type="InterPro" id="IPR035963">
    <property type="entry name" value="FERM_2"/>
</dbReference>
<dbReference type="InterPro" id="IPR019748">
    <property type="entry name" value="FERM_central"/>
</dbReference>
<dbReference type="InterPro" id="IPR019747">
    <property type="entry name" value="FERM_CS"/>
</dbReference>
<dbReference type="InterPro" id="IPR000299">
    <property type="entry name" value="FERM_domain"/>
</dbReference>
<dbReference type="InterPro" id="IPR018979">
    <property type="entry name" value="FERM_N"/>
</dbReference>
<dbReference type="InterPro" id="IPR018980">
    <property type="entry name" value="FERM_PH-like_C"/>
</dbReference>
<dbReference type="InterPro" id="IPR011993">
    <property type="entry name" value="PH-like_dom_sf"/>
</dbReference>
<dbReference type="InterPro" id="IPR029071">
    <property type="entry name" value="Ubiquitin-like_domsf"/>
</dbReference>
<dbReference type="PANTHER" id="PTHR23280">
    <property type="entry name" value="4.1 G PROTEIN"/>
    <property type="match status" value="1"/>
</dbReference>
<dbReference type="PANTHER" id="PTHR23280:SF18">
    <property type="entry name" value="BAND 4.1-LIKE PROTEIN 4B"/>
    <property type="match status" value="1"/>
</dbReference>
<dbReference type="Pfam" id="PF08736">
    <property type="entry name" value="FA"/>
    <property type="match status" value="1"/>
</dbReference>
<dbReference type="Pfam" id="PF09380">
    <property type="entry name" value="FERM_C"/>
    <property type="match status" value="1"/>
</dbReference>
<dbReference type="Pfam" id="PF00373">
    <property type="entry name" value="FERM_M"/>
    <property type="match status" value="1"/>
</dbReference>
<dbReference type="Pfam" id="PF09379">
    <property type="entry name" value="FERM_N"/>
    <property type="match status" value="1"/>
</dbReference>
<dbReference type="PRINTS" id="PR00935">
    <property type="entry name" value="BAND41"/>
</dbReference>
<dbReference type="PRINTS" id="PR00661">
    <property type="entry name" value="ERMFAMILY"/>
</dbReference>
<dbReference type="SMART" id="SM00295">
    <property type="entry name" value="B41"/>
    <property type="match status" value="1"/>
</dbReference>
<dbReference type="SMART" id="SM01195">
    <property type="entry name" value="FA"/>
    <property type="match status" value="1"/>
</dbReference>
<dbReference type="SMART" id="SM01196">
    <property type="entry name" value="FERM_C"/>
    <property type="match status" value="1"/>
</dbReference>
<dbReference type="SUPFAM" id="SSF50729">
    <property type="entry name" value="PH domain-like"/>
    <property type="match status" value="1"/>
</dbReference>
<dbReference type="SUPFAM" id="SSF47031">
    <property type="entry name" value="Second domain of FERM"/>
    <property type="match status" value="1"/>
</dbReference>
<dbReference type="SUPFAM" id="SSF54236">
    <property type="entry name" value="Ubiquitin-like"/>
    <property type="match status" value="1"/>
</dbReference>
<dbReference type="PROSITE" id="PS00661">
    <property type="entry name" value="FERM_2"/>
    <property type="match status" value="1"/>
</dbReference>
<dbReference type="PROSITE" id="PS50057">
    <property type="entry name" value="FERM_3"/>
    <property type="match status" value="1"/>
</dbReference>
<comment type="function">
    <text evidence="1 5 6 7">Up-regulates the activity of the Rho guanine nucleotide exchange factor ARHGEF18 (By similarity). Involved in the regulation of the circumferential actomyosin belt in epithelial cells (PubMed:22006950). Promotes cellular adhesion, migration and motility in vitro and may play a role in wound healing (PubMed:23664528). May have a role in mediating cytoskeletal changes associated with steroid-induced cell differentiation (PubMed:14521927).</text>
</comment>
<comment type="subunit">
    <text evidence="1">Interacts (via FERM domain) with ARHGEF18 (via C-terminus); the interaction activates ARHGEF18.</text>
</comment>
<comment type="subcellular location">
    <subcellularLocation>
        <location evidence="6">Cytoplasm</location>
    </subcellularLocation>
    <subcellularLocation>
        <location evidence="6">Cell junction</location>
        <location evidence="6">Tight junction</location>
    </subcellularLocation>
    <text evidence="6">Accumulates along apical cell-cell boundaries and is also detected in the cytoplasm in a punctate manner.</text>
</comment>
<comment type="alternative products">
    <event type="alternative splicing"/>
    <isoform>
        <id>Q9H329-1</id>
        <name>1</name>
        <sequence type="displayed"/>
    </isoform>
    <isoform>
        <id>Q9H329-2</id>
        <name>2</name>
        <sequence type="described" ref="VSP_007202 VSP_007203"/>
    </isoform>
</comment>
<comment type="tissue specificity">
    <text evidence="5 7">Expressed at higher levels in acute wounds than chronic wounds with increased expression in healing wounds, especially at the leading wound edge (PubMed:23664528). Isoform 1 is highly expressed in brain. Isoform 2 is highly expressed in testis with lower levels in prostate and breast (PubMed:14521927).</text>
</comment>
<comment type="induction">
    <text evidence="5">By the androgen dihydrotestosterone (DHT).</text>
</comment>
<comment type="PTM">
    <text evidence="1">May be negatively regulated by phosphorylation.</text>
</comment>
<comment type="sequence caution" evidence="11">
    <conflict type="frameshift">
        <sequence resource="EMBL-CDS" id="AAG43366"/>
    </conflict>
</comment>
<comment type="sequence caution" evidence="11">
    <conflict type="frameshift">
        <sequence resource="EMBL-CDS" id="AAG43368"/>
    </conflict>
</comment>
<name>E41LB_HUMAN</name>
<sequence>MLRFLRRTFGRRSMQRYARGAAGRGAAGLGDERDGGPRGGPAAAASSSALPAAPGGSVFPAGGGPLLTGGAAVHISAAGAAKATLYCRVFLLDGTEVSVDLPKHAKGQDLFDQIVYHLDLVETDYFGLQFLDSAQVAHWLDHAKPIKKQMKIGPAYALHFRVKYYSSEPNNLREEFTRYLFVLQLRHDILSGKLKCPYETAVELAALCLQAELGECELPEHTPELVSEFRFIPNQTEAMEFDIFQRWKECRGKSPAQAELSYLNKAKWLEMYGVDMHVVRGRDGCEYSLGLTPTGILIFEGANKIGLFFWPKITKMDFKKSKLTLVVVEDDDQGREQEHTFVFRLDSARTCKHLWKCAVEHHAFFRLRTPGNSKSNRSDFIRLGSRFRFSGRTEYQATHGSRLRRTSTFERKPSKRYPSRRHSTFKASNPVIAAQLCSKTNPEVHNYQPQYHPNIHPSQPRWHPHSPNVSYPLPSPVLSSSDRLPFGIEENGGTPFLTAASGRHHHQHQHQHQHQHHSNYSLSLTLENKEGPLRSPNSSSKSLTKLSPGTPALFSEAAAHLKKLELETVKAAGPWPPLHININKAEEKKVSEKTLQTPLLPSPVADHVKCNILKAQLENASRVNIQGGKEESPFVNINKKSSLQDASVRSPIPIRVETAQPAVEKPEIKPPRVRKLTRQYSFDEDDLPPDLAEAVGVTTSTTTNTTTAATQVSVPLPSPKVQNVSSPHKSEGKGLLSPGAKSPSDRGGAFTLEPGDLLMDFTEATPLAEPASNPHCAHSRCSPPLSLPMKEETTGVCMYPPIKTRLIKTFPVDTMNPFPDTFTTGPQFTADFRDSKLQCCPGPTSPLIPAATLRPLTETVSTVQTIYTTRKPVSLAASAETLRQELEREKMMKRLLMTEL</sequence>
<keyword id="KW-0025">Alternative splicing</keyword>
<keyword id="KW-0965">Cell junction</keyword>
<keyword id="KW-0963">Cytoplasm</keyword>
<keyword id="KW-0597">Phosphoprotein</keyword>
<keyword id="KW-1267">Proteomics identification</keyword>
<keyword id="KW-1185">Reference proteome</keyword>
<keyword id="KW-0796">Tight junction</keyword>
<organism>
    <name type="scientific">Homo sapiens</name>
    <name type="common">Human</name>
    <dbReference type="NCBI Taxonomy" id="9606"/>
    <lineage>
        <taxon>Eukaryota</taxon>
        <taxon>Metazoa</taxon>
        <taxon>Chordata</taxon>
        <taxon>Craniata</taxon>
        <taxon>Vertebrata</taxon>
        <taxon>Euteleostomi</taxon>
        <taxon>Mammalia</taxon>
        <taxon>Eutheria</taxon>
        <taxon>Euarchontoglires</taxon>
        <taxon>Primates</taxon>
        <taxon>Haplorrhini</taxon>
        <taxon>Catarrhini</taxon>
        <taxon>Hominidae</taxon>
        <taxon>Homo</taxon>
    </lineage>
</organism>